<sequence length="249" mass="28620">MTHQPQQSPQFFLTAPSPCPYLEGQMERKVFTHLVGDKANEINDLLTQGGFRRSQNIAYRPACELCRACISVRILAGEFKMTRNMRRVWTQNNDLIGRVHKAQPSTEQYALFRDYLDARHRSGGMSDMTVLDYAMMIEDTHVNTQIIEYRKRGPESFISAKGDGELIAVALTDVMADGLSMVYSFFSPHMHDRSLGTYMILDHIQRAHAAGLPHVYLGYWVEGSRKMQYKIRFTPQEHLGPRGWQRFEG</sequence>
<protein>
    <recommendedName>
        <fullName evidence="1">Aspartate/glutamate leucyltransferase</fullName>
        <ecNumber evidence="1">2.3.2.29</ecNumber>
    </recommendedName>
</protein>
<name>BPT_BRUA4</name>
<dbReference type="EC" id="2.3.2.29" evidence="1"/>
<dbReference type="EMBL" id="CP000758">
    <property type="protein sequence ID" value="ABS15251.1"/>
    <property type="molecule type" value="Genomic_DNA"/>
</dbReference>
<dbReference type="RefSeq" id="WP_012092346.1">
    <property type="nucleotide sequence ID" value="NC_009667.1"/>
</dbReference>
<dbReference type="SMR" id="A6X1Z7"/>
<dbReference type="STRING" id="439375.Oant_2538"/>
<dbReference type="KEGG" id="oan:Oant_2538"/>
<dbReference type="eggNOG" id="COG2935">
    <property type="taxonomic scope" value="Bacteria"/>
</dbReference>
<dbReference type="HOGENOM" id="CLU_077607_1_0_5"/>
<dbReference type="Proteomes" id="UP000002301">
    <property type="component" value="Chromosome 1"/>
</dbReference>
<dbReference type="GO" id="GO:0005737">
    <property type="term" value="C:cytoplasm"/>
    <property type="evidence" value="ECO:0007669"/>
    <property type="project" value="UniProtKB-SubCell"/>
</dbReference>
<dbReference type="GO" id="GO:0004057">
    <property type="term" value="F:arginyl-tRNA--protein transferase activity"/>
    <property type="evidence" value="ECO:0007669"/>
    <property type="project" value="InterPro"/>
</dbReference>
<dbReference type="GO" id="GO:0008914">
    <property type="term" value="F:leucyl-tRNA--protein transferase activity"/>
    <property type="evidence" value="ECO:0007669"/>
    <property type="project" value="UniProtKB-UniRule"/>
</dbReference>
<dbReference type="GO" id="GO:0071596">
    <property type="term" value="P:ubiquitin-dependent protein catabolic process via the N-end rule pathway"/>
    <property type="evidence" value="ECO:0007669"/>
    <property type="project" value="InterPro"/>
</dbReference>
<dbReference type="HAMAP" id="MF_00689">
    <property type="entry name" value="Bpt"/>
    <property type="match status" value="1"/>
</dbReference>
<dbReference type="InterPro" id="IPR016181">
    <property type="entry name" value="Acyl_CoA_acyltransferase"/>
</dbReference>
<dbReference type="InterPro" id="IPR017138">
    <property type="entry name" value="Asp_Glu_LeuTrfase"/>
</dbReference>
<dbReference type="InterPro" id="IPR030700">
    <property type="entry name" value="N-end_Aminoacyl_Trfase"/>
</dbReference>
<dbReference type="InterPro" id="IPR007472">
    <property type="entry name" value="N-end_Aminoacyl_Trfase_C"/>
</dbReference>
<dbReference type="InterPro" id="IPR007471">
    <property type="entry name" value="N-end_Aminoacyl_Trfase_N"/>
</dbReference>
<dbReference type="NCBIfam" id="NF002343">
    <property type="entry name" value="PRK01305.1-4"/>
    <property type="match status" value="1"/>
</dbReference>
<dbReference type="NCBIfam" id="NF002346">
    <property type="entry name" value="PRK01305.2-3"/>
    <property type="match status" value="1"/>
</dbReference>
<dbReference type="PANTHER" id="PTHR21367">
    <property type="entry name" value="ARGININE-TRNA-PROTEIN TRANSFERASE 1"/>
    <property type="match status" value="1"/>
</dbReference>
<dbReference type="PANTHER" id="PTHR21367:SF1">
    <property type="entry name" value="ARGINYL-TRNA--PROTEIN TRANSFERASE 1"/>
    <property type="match status" value="1"/>
</dbReference>
<dbReference type="Pfam" id="PF04377">
    <property type="entry name" value="ATE_C"/>
    <property type="match status" value="1"/>
</dbReference>
<dbReference type="Pfam" id="PF04376">
    <property type="entry name" value="ATE_N"/>
    <property type="match status" value="1"/>
</dbReference>
<dbReference type="PIRSF" id="PIRSF037208">
    <property type="entry name" value="ATE_pro_prd"/>
    <property type="match status" value="1"/>
</dbReference>
<dbReference type="SUPFAM" id="SSF55729">
    <property type="entry name" value="Acyl-CoA N-acyltransferases (Nat)"/>
    <property type="match status" value="1"/>
</dbReference>
<organism>
    <name type="scientific">Brucella anthropi (strain ATCC 49188 / DSM 6882 / CCUG 24695 / JCM 21032 / LMG 3331 / NBRC 15819 / NCTC 12168 / Alc 37)</name>
    <name type="common">Ochrobactrum anthropi</name>
    <dbReference type="NCBI Taxonomy" id="439375"/>
    <lineage>
        <taxon>Bacteria</taxon>
        <taxon>Pseudomonadati</taxon>
        <taxon>Pseudomonadota</taxon>
        <taxon>Alphaproteobacteria</taxon>
        <taxon>Hyphomicrobiales</taxon>
        <taxon>Brucellaceae</taxon>
        <taxon>Brucella/Ochrobactrum group</taxon>
        <taxon>Brucella</taxon>
    </lineage>
</organism>
<reference key="1">
    <citation type="journal article" date="2011" name="J. Bacteriol.">
        <title>Genome of Ochrobactrum anthropi ATCC 49188 T, a versatile opportunistic pathogen and symbiont of several eukaryotic hosts.</title>
        <authorList>
            <person name="Chain P.S."/>
            <person name="Lang D.M."/>
            <person name="Comerci D.J."/>
            <person name="Malfatti S.A."/>
            <person name="Vergez L.M."/>
            <person name="Shin M."/>
            <person name="Ugalde R.A."/>
            <person name="Garcia E."/>
            <person name="Tolmasky M.E."/>
        </authorList>
    </citation>
    <scope>NUCLEOTIDE SEQUENCE [LARGE SCALE GENOMIC DNA]</scope>
    <source>
        <strain>ATCC 49188 / DSM 6882 / CCUG 24695 / JCM 21032 / LMG 3331 / NBRC 15819 / NCTC 12168 / Alc 37</strain>
    </source>
</reference>
<evidence type="ECO:0000255" key="1">
    <source>
        <dbReference type="HAMAP-Rule" id="MF_00689"/>
    </source>
</evidence>
<gene>
    <name evidence="1" type="primary">bpt</name>
    <name type="ordered locus">Oant_2538</name>
</gene>
<comment type="function">
    <text evidence="1">Functions in the N-end rule pathway of protein degradation where it conjugates Leu from its aminoacyl-tRNA to the N-termini of proteins containing an N-terminal aspartate or glutamate.</text>
</comment>
<comment type="catalytic activity">
    <reaction evidence="1">
        <text>N-terminal L-glutamyl-[protein] + L-leucyl-tRNA(Leu) = N-terminal L-leucyl-L-glutamyl-[protein] + tRNA(Leu) + H(+)</text>
        <dbReference type="Rhea" id="RHEA:50412"/>
        <dbReference type="Rhea" id="RHEA-COMP:9613"/>
        <dbReference type="Rhea" id="RHEA-COMP:9622"/>
        <dbReference type="Rhea" id="RHEA-COMP:12664"/>
        <dbReference type="Rhea" id="RHEA-COMP:12668"/>
        <dbReference type="ChEBI" id="CHEBI:15378"/>
        <dbReference type="ChEBI" id="CHEBI:64721"/>
        <dbReference type="ChEBI" id="CHEBI:78442"/>
        <dbReference type="ChEBI" id="CHEBI:78494"/>
        <dbReference type="ChEBI" id="CHEBI:133041"/>
        <dbReference type="EC" id="2.3.2.29"/>
    </reaction>
</comment>
<comment type="catalytic activity">
    <reaction evidence="1">
        <text>N-terminal L-aspartyl-[protein] + L-leucyl-tRNA(Leu) = N-terminal L-leucyl-L-aspartyl-[protein] + tRNA(Leu) + H(+)</text>
        <dbReference type="Rhea" id="RHEA:50420"/>
        <dbReference type="Rhea" id="RHEA-COMP:9613"/>
        <dbReference type="Rhea" id="RHEA-COMP:9622"/>
        <dbReference type="Rhea" id="RHEA-COMP:12669"/>
        <dbReference type="Rhea" id="RHEA-COMP:12674"/>
        <dbReference type="ChEBI" id="CHEBI:15378"/>
        <dbReference type="ChEBI" id="CHEBI:64720"/>
        <dbReference type="ChEBI" id="CHEBI:78442"/>
        <dbReference type="ChEBI" id="CHEBI:78494"/>
        <dbReference type="ChEBI" id="CHEBI:133042"/>
        <dbReference type="EC" id="2.3.2.29"/>
    </reaction>
</comment>
<comment type="subcellular location">
    <subcellularLocation>
        <location evidence="1">Cytoplasm</location>
    </subcellularLocation>
</comment>
<comment type="similarity">
    <text evidence="1">Belongs to the R-transferase family. Bpt subfamily.</text>
</comment>
<feature type="chain" id="PRO_1000045138" description="Aspartate/glutamate leucyltransferase">
    <location>
        <begin position="1"/>
        <end position="249"/>
    </location>
</feature>
<keyword id="KW-0012">Acyltransferase</keyword>
<keyword id="KW-0963">Cytoplasm</keyword>
<keyword id="KW-1185">Reference proteome</keyword>
<keyword id="KW-0808">Transferase</keyword>
<proteinExistence type="inferred from homology"/>
<accession>A6X1Z7</accession>